<feature type="chain" id="PRO_0000351476" description="Digeranylgeranylglycerophospholipid reductase">
    <location>
        <begin position="1"/>
        <end position="393"/>
    </location>
</feature>
<feature type="binding site" evidence="1">
    <location>
        <position position="13"/>
    </location>
    <ligand>
        <name>FAD</name>
        <dbReference type="ChEBI" id="CHEBI:57692"/>
    </ligand>
</feature>
<feature type="binding site" evidence="1">
    <location>
        <position position="32"/>
    </location>
    <ligand>
        <name>FAD</name>
        <dbReference type="ChEBI" id="CHEBI:57692"/>
    </ligand>
</feature>
<feature type="binding site" evidence="1">
    <location>
        <position position="43"/>
    </location>
    <ligand>
        <name>FAD</name>
        <dbReference type="ChEBI" id="CHEBI:57692"/>
    </ligand>
</feature>
<feature type="binding site" evidence="1">
    <location>
        <position position="44"/>
    </location>
    <ligand>
        <name>FAD</name>
        <dbReference type="ChEBI" id="CHEBI:57692"/>
    </ligand>
</feature>
<feature type="binding site" evidence="1">
    <location>
        <position position="46"/>
    </location>
    <ligand>
        <name>FAD</name>
        <dbReference type="ChEBI" id="CHEBI:57692"/>
    </ligand>
</feature>
<feature type="binding site" evidence="1">
    <location>
        <position position="95"/>
    </location>
    <ligand>
        <name>FAD</name>
        <dbReference type="ChEBI" id="CHEBI:57692"/>
    </ligand>
</feature>
<feature type="binding site" evidence="1">
    <location>
        <position position="119"/>
    </location>
    <ligand>
        <name>FAD</name>
        <dbReference type="ChEBI" id="CHEBI:57692"/>
    </ligand>
</feature>
<feature type="binding site" evidence="1">
    <location>
        <position position="274"/>
    </location>
    <ligand>
        <name>FAD</name>
        <dbReference type="ChEBI" id="CHEBI:57692"/>
    </ligand>
</feature>
<feature type="binding site" evidence="1">
    <location>
        <position position="286"/>
    </location>
    <ligand>
        <name>FAD</name>
        <dbReference type="ChEBI" id="CHEBI:57692"/>
    </ligand>
</feature>
<feature type="binding site" evidence="1">
    <location>
        <position position="327"/>
    </location>
    <ligand>
        <name>a 2,3-bis-O-(geranylgeranyl)-sn-glycerol 1-phospholipid</name>
        <dbReference type="ChEBI" id="CHEBI:138140"/>
    </ligand>
</feature>
<feature type="binding site" evidence="1">
    <location>
        <position position="363"/>
    </location>
    <ligand>
        <name>a 2,3-bis-O-(geranylgeranyl)-sn-glycerol 1-phospholipid</name>
        <dbReference type="ChEBI" id="CHEBI:138140"/>
    </ligand>
</feature>
<reference key="1">
    <citation type="journal article" date="1999" name="Genetics">
        <title>Divergence of the hyperthermophilic archaea Pyrococcus furiosus and P. horikoshii inferred from complete genomic sequences.</title>
        <authorList>
            <person name="Maeder D.L."/>
            <person name="Weiss R.B."/>
            <person name="Dunn D.M."/>
            <person name="Cherry J.L."/>
            <person name="Gonzalez J.M."/>
            <person name="DiRuggiero J."/>
            <person name="Robb F.T."/>
        </authorList>
    </citation>
    <scope>NUCLEOTIDE SEQUENCE [LARGE SCALE GENOMIC DNA]</scope>
    <source>
        <strain>ATCC 43587 / DSM 3638 / JCM 8422 / Vc1</strain>
    </source>
</reference>
<gene>
    <name type="ordered locus">PF0097</name>
</gene>
<evidence type="ECO:0000255" key="1">
    <source>
        <dbReference type="HAMAP-Rule" id="MF_01287"/>
    </source>
</evidence>
<organism>
    <name type="scientific">Pyrococcus furiosus (strain ATCC 43587 / DSM 3638 / JCM 8422 / Vc1)</name>
    <dbReference type="NCBI Taxonomy" id="186497"/>
    <lineage>
        <taxon>Archaea</taxon>
        <taxon>Methanobacteriati</taxon>
        <taxon>Methanobacteriota</taxon>
        <taxon>Thermococci</taxon>
        <taxon>Thermococcales</taxon>
        <taxon>Thermococcaceae</taxon>
        <taxon>Pyrococcus</taxon>
    </lineage>
</organism>
<name>GGR_PYRFU</name>
<proteinExistence type="inferred from homology"/>
<sequence length="393" mass="44081">MKYDVVVVGSGVAGPIVARDVAKAGFSVLLVDKKPAIGTPKQCAEGINVNVFKEFDIPYDKRFINREIYGARIYSPSGYTAELRYDKVSGVILERKVFDKMLAYYAAKAGADVWARTEVIDLLRKEGKIMGVKAKHEGELVEIEAKIIVAADGVESTVARLAGINTYAPPHEFDSAYEYEMIIEGYDPDLIHLWFGNEIAPRGYVWVFPKDEDRANVGIGINSDNEKTAKYYLDKWLKENNIPTKKILEINVGLVPVGGFVRELVKENVAVVGDAARQVNPVHGGGMYEAMKAANILAKWIVKALEEENLELLKNYTKEWWEVEGPKMERLLKLRRAMEKLTDEDIDVFVQLLGGTDLEKLAGGNYFEVVKALMKHPKVLMSKRRLEILKALL</sequence>
<keyword id="KW-0274">FAD</keyword>
<keyword id="KW-0285">Flavoprotein</keyword>
<keyword id="KW-0444">Lipid biosynthesis</keyword>
<keyword id="KW-0443">Lipid metabolism</keyword>
<keyword id="KW-0560">Oxidoreductase</keyword>
<keyword id="KW-0594">Phospholipid biosynthesis</keyword>
<keyword id="KW-1208">Phospholipid metabolism</keyword>
<keyword id="KW-1185">Reference proteome</keyword>
<comment type="function">
    <text evidence="1">Is involved in the reduction of 2,3-digeranylgeranylglycerophospholipids (unsaturated archaeols) into 2,3-diphytanylglycerophospholipids (saturated archaeols) in the biosynthesis of archaeal membrane lipids. Catalyzes the formation of archaetidic acid (2,3-di-O-phytanyl-sn-glyceryl phosphate) from 2,3-di-O-geranylgeranylglyceryl phosphate (DGGGP) via the hydrogenation of each double bond of the isoprenoid chains. Is also probably able to reduce double bonds of geranyl groups in CDP-2,3-bis-O-(geranylgeranyl)-sn-glycerol and archaetidylserine, thus acting at various stages in the biosynthesis of archaeal membrane lipids.</text>
</comment>
<comment type="catalytic activity">
    <reaction evidence="1">
        <text>a 2,3-bis-O-phytanyl-sn-glycerol 1-phospholipid + 8 A = a 2,3-bis-O-(geranylgeranyl)-sn-glycerol 1-phospholipid + 8 AH2</text>
        <dbReference type="Rhea" id="RHEA:64376"/>
        <dbReference type="ChEBI" id="CHEBI:13193"/>
        <dbReference type="ChEBI" id="CHEBI:17499"/>
        <dbReference type="ChEBI" id="CHEBI:138139"/>
        <dbReference type="ChEBI" id="CHEBI:138140"/>
    </reaction>
    <physiologicalReaction direction="right-to-left" evidence="1">
        <dbReference type="Rhea" id="RHEA:64378"/>
    </physiologicalReaction>
</comment>
<comment type="catalytic activity">
    <reaction evidence="1">
        <text>2,3-bis-O-(phytanyl)-sn-glycerol 1-phosphate + 8 A = 2,3-bis-O-(geranylgeranyl)-sn-glycerol 1-phosphate + 8 AH2</text>
        <dbReference type="Rhea" id="RHEA:64368"/>
        <dbReference type="ChEBI" id="CHEBI:13193"/>
        <dbReference type="ChEBI" id="CHEBI:17499"/>
        <dbReference type="ChEBI" id="CHEBI:58837"/>
        <dbReference type="ChEBI" id="CHEBI:73125"/>
    </reaction>
    <physiologicalReaction direction="right-to-left" evidence="1">
        <dbReference type="Rhea" id="RHEA:64370"/>
    </physiologicalReaction>
</comment>
<comment type="catalytic activity">
    <reaction evidence="1">
        <text>CDP-2,3-bis-O-(geranylgeranyl)-sn-glycerol + 8 AH2 = CDP-2,3-bis-O-(phytanyl)-sn-glycerol + 8 A</text>
        <dbReference type="Rhea" id="RHEA:84207"/>
        <dbReference type="ChEBI" id="CHEBI:13193"/>
        <dbReference type="ChEBI" id="CHEBI:17499"/>
        <dbReference type="ChEBI" id="CHEBI:58838"/>
        <dbReference type="ChEBI" id="CHEBI:74004"/>
    </reaction>
    <physiologicalReaction direction="left-to-right" evidence="1">
        <dbReference type="Rhea" id="RHEA:84208"/>
    </physiologicalReaction>
</comment>
<comment type="catalytic activity">
    <reaction evidence="1">
        <text>archaetidylserine + 8 AH2 = 2,3-bis-O-phytanyl-sn-glycero-3-phospho-L-serine + 8 A</text>
        <dbReference type="Rhea" id="RHEA:84215"/>
        <dbReference type="ChEBI" id="CHEBI:13193"/>
        <dbReference type="ChEBI" id="CHEBI:17499"/>
        <dbReference type="ChEBI" id="CHEBI:71517"/>
        <dbReference type="ChEBI" id="CHEBI:74853"/>
    </reaction>
    <physiologicalReaction direction="left-to-right" evidence="1">
        <dbReference type="Rhea" id="RHEA:84216"/>
    </physiologicalReaction>
</comment>
<comment type="cofactor">
    <cofactor evidence="1">
        <name>FAD</name>
        <dbReference type="ChEBI" id="CHEBI:57692"/>
    </cofactor>
    <text evidence="1">Binds 1 FAD per subunit.</text>
</comment>
<comment type="pathway">
    <text evidence="1">Membrane lipid metabolism; glycerophospholipid metabolism.</text>
</comment>
<comment type="miscellaneous">
    <text evidence="1">Reduction reaction proceeds via syn addition of hydrogen for double bonds.</text>
</comment>
<comment type="similarity">
    <text evidence="1">Belongs to the geranylgeranyl reductase family. DGGGPL reductase subfamily.</text>
</comment>
<protein>
    <recommendedName>
        <fullName evidence="1">Digeranylgeranylglycerophospholipid reductase</fullName>
        <shortName evidence="1">DGGGPL reductase</shortName>
        <ecNumber evidence="1">1.3.-.-</ecNumber>
    </recommendedName>
    <alternativeName>
        <fullName evidence="1">2,3-bis-O-geranylgeranylglyceryl phosphate reductase</fullName>
    </alternativeName>
    <alternativeName>
        <fullName evidence="1">Geranylgeranyl reductase</fullName>
        <shortName evidence="1">GGR</shortName>
    </alternativeName>
</protein>
<dbReference type="EC" id="1.3.-.-" evidence="1"/>
<dbReference type="EMBL" id="AE009950">
    <property type="protein sequence ID" value="AAL80221.1"/>
    <property type="molecule type" value="Genomic_DNA"/>
</dbReference>
<dbReference type="RefSeq" id="WP_011011209.1">
    <property type="nucleotide sequence ID" value="NZ_CP023154.1"/>
</dbReference>
<dbReference type="SMR" id="Q8U4J0"/>
<dbReference type="STRING" id="186497.PF0097"/>
<dbReference type="PaxDb" id="186497-PF0097"/>
<dbReference type="DNASU" id="1467926"/>
<dbReference type="KEGG" id="pfu:PF0097"/>
<dbReference type="PATRIC" id="fig|186497.12.peg.101"/>
<dbReference type="eggNOG" id="arCOG00570">
    <property type="taxonomic scope" value="Archaea"/>
</dbReference>
<dbReference type="HOGENOM" id="CLU_024648_0_0_2"/>
<dbReference type="OrthoDB" id="6062at2157"/>
<dbReference type="PhylomeDB" id="Q8U4J0"/>
<dbReference type="UniPathway" id="UPA00940"/>
<dbReference type="Proteomes" id="UP000001013">
    <property type="component" value="Chromosome"/>
</dbReference>
<dbReference type="GO" id="GO:0016020">
    <property type="term" value="C:membrane"/>
    <property type="evidence" value="ECO:0007669"/>
    <property type="project" value="GOC"/>
</dbReference>
<dbReference type="GO" id="GO:0050660">
    <property type="term" value="F:flavin adenine dinucleotide binding"/>
    <property type="evidence" value="ECO:0007669"/>
    <property type="project" value="UniProtKB-UniRule"/>
</dbReference>
<dbReference type="GO" id="GO:0045550">
    <property type="term" value="F:geranylgeranyl reductase activity"/>
    <property type="evidence" value="ECO:0007669"/>
    <property type="project" value="InterPro"/>
</dbReference>
<dbReference type="GO" id="GO:0016628">
    <property type="term" value="F:oxidoreductase activity, acting on the CH-CH group of donors, NAD or NADP as acceptor"/>
    <property type="evidence" value="ECO:0007669"/>
    <property type="project" value="InterPro"/>
</dbReference>
<dbReference type="GO" id="GO:0046474">
    <property type="term" value="P:glycerophospholipid biosynthetic process"/>
    <property type="evidence" value="ECO:0007669"/>
    <property type="project" value="UniProtKB-UniRule"/>
</dbReference>
<dbReference type="GO" id="GO:0046467">
    <property type="term" value="P:membrane lipid biosynthetic process"/>
    <property type="evidence" value="ECO:0007669"/>
    <property type="project" value="InterPro"/>
</dbReference>
<dbReference type="Gene3D" id="3.30.9.10">
    <property type="entry name" value="D-Amino Acid Oxidase, subunit A, domain 2"/>
    <property type="match status" value="1"/>
</dbReference>
<dbReference type="Gene3D" id="3.50.50.60">
    <property type="entry name" value="FAD/NAD(P)-binding domain"/>
    <property type="match status" value="1"/>
</dbReference>
<dbReference type="HAMAP" id="MF_01287">
    <property type="entry name" value="DGGGPL_reductase"/>
    <property type="match status" value="1"/>
</dbReference>
<dbReference type="InterPro" id="IPR023590">
    <property type="entry name" value="DGGGPL_reductase"/>
</dbReference>
<dbReference type="InterPro" id="IPR036188">
    <property type="entry name" value="FAD/NAD-bd_sf"/>
</dbReference>
<dbReference type="InterPro" id="IPR011777">
    <property type="entry name" value="Geranylgeranyl_Rdtase_fam"/>
</dbReference>
<dbReference type="InterPro" id="IPR050407">
    <property type="entry name" value="Geranylgeranyl_reductase"/>
</dbReference>
<dbReference type="InterPro" id="IPR054715">
    <property type="entry name" value="GGR_cat"/>
</dbReference>
<dbReference type="NCBIfam" id="TIGR02032">
    <property type="entry name" value="GG-red-SF"/>
    <property type="match status" value="1"/>
</dbReference>
<dbReference type="PANTHER" id="PTHR42685:SF18">
    <property type="entry name" value="DIGERANYLGERANYLGLYCEROPHOSPHOLIPID REDUCTASE"/>
    <property type="match status" value="1"/>
</dbReference>
<dbReference type="PANTHER" id="PTHR42685">
    <property type="entry name" value="GERANYLGERANYL DIPHOSPHATE REDUCTASE"/>
    <property type="match status" value="1"/>
</dbReference>
<dbReference type="Pfam" id="PF12831">
    <property type="entry name" value="FAD_oxidored"/>
    <property type="match status" value="1"/>
</dbReference>
<dbReference type="Pfam" id="PF22578">
    <property type="entry name" value="GGR_cat"/>
    <property type="match status" value="1"/>
</dbReference>
<dbReference type="PRINTS" id="PR00420">
    <property type="entry name" value="RNGMNOXGNASE"/>
</dbReference>
<dbReference type="SUPFAM" id="SSF51905">
    <property type="entry name" value="FAD/NAD(P)-binding domain"/>
    <property type="match status" value="1"/>
</dbReference>
<accession>Q8U4J0</accession>